<reference key="1">
    <citation type="journal article" date="2005" name="Nature">
        <title>The genome of the social amoeba Dictyostelium discoideum.</title>
        <authorList>
            <person name="Eichinger L."/>
            <person name="Pachebat J.A."/>
            <person name="Gloeckner G."/>
            <person name="Rajandream M.A."/>
            <person name="Sucgang R."/>
            <person name="Berriman M."/>
            <person name="Song J."/>
            <person name="Olsen R."/>
            <person name="Szafranski K."/>
            <person name="Xu Q."/>
            <person name="Tunggal B."/>
            <person name="Kummerfeld S."/>
            <person name="Madera M."/>
            <person name="Konfortov B.A."/>
            <person name="Rivero F."/>
            <person name="Bankier A.T."/>
            <person name="Lehmann R."/>
            <person name="Hamlin N."/>
            <person name="Davies R."/>
            <person name="Gaudet P."/>
            <person name="Fey P."/>
            <person name="Pilcher K."/>
            <person name="Chen G."/>
            <person name="Saunders D."/>
            <person name="Sodergren E.J."/>
            <person name="Davis P."/>
            <person name="Kerhornou A."/>
            <person name="Nie X."/>
            <person name="Hall N."/>
            <person name="Anjard C."/>
            <person name="Hemphill L."/>
            <person name="Bason N."/>
            <person name="Farbrother P."/>
            <person name="Desany B."/>
            <person name="Just E."/>
            <person name="Morio T."/>
            <person name="Rost R."/>
            <person name="Churcher C.M."/>
            <person name="Cooper J."/>
            <person name="Haydock S."/>
            <person name="van Driessche N."/>
            <person name="Cronin A."/>
            <person name="Goodhead I."/>
            <person name="Muzny D.M."/>
            <person name="Mourier T."/>
            <person name="Pain A."/>
            <person name="Lu M."/>
            <person name="Harper D."/>
            <person name="Lindsay R."/>
            <person name="Hauser H."/>
            <person name="James K.D."/>
            <person name="Quiles M."/>
            <person name="Madan Babu M."/>
            <person name="Saito T."/>
            <person name="Buchrieser C."/>
            <person name="Wardroper A."/>
            <person name="Felder M."/>
            <person name="Thangavelu M."/>
            <person name="Johnson D."/>
            <person name="Knights A."/>
            <person name="Loulseged H."/>
            <person name="Mungall K.L."/>
            <person name="Oliver K."/>
            <person name="Price C."/>
            <person name="Quail M.A."/>
            <person name="Urushihara H."/>
            <person name="Hernandez J."/>
            <person name="Rabbinowitsch E."/>
            <person name="Steffen D."/>
            <person name="Sanders M."/>
            <person name="Ma J."/>
            <person name="Kohara Y."/>
            <person name="Sharp S."/>
            <person name="Simmonds M.N."/>
            <person name="Spiegler S."/>
            <person name="Tivey A."/>
            <person name="Sugano S."/>
            <person name="White B."/>
            <person name="Walker D."/>
            <person name="Woodward J.R."/>
            <person name="Winckler T."/>
            <person name="Tanaka Y."/>
            <person name="Shaulsky G."/>
            <person name="Schleicher M."/>
            <person name="Weinstock G.M."/>
            <person name="Rosenthal A."/>
            <person name="Cox E.C."/>
            <person name="Chisholm R.L."/>
            <person name="Gibbs R.A."/>
            <person name="Loomis W.F."/>
            <person name="Platzer M."/>
            <person name="Kay R.R."/>
            <person name="Williams J.G."/>
            <person name="Dear P.H."/>
            <person name="Noegel A.A."/>
            <person name="Barrell B.G."/>
            <person name="Kuspa A."/>
        </authorList>
    </citation>
    <scope>NUCLEOTIDE SEQUENCE [LARGE SCALE GENOMIC DNA]</scope>
    <source>
        <strain>AX4</strain>
    </source>
</reference>
<feature type="chain" id="PRO_0000351231" description="Putative uncharacterized protein DDB_G0282499">
    <location>
        <begin position="1"/>
        <end position="935"/>
    </location>
</feature>
<feature type="region of interest" description="Disordered" evidence="2">
    <location>
        <begin position="1"/>
        <end position="32"/>
    </location>
</feature>
<feature type="region of interest" description="Disordered" evidence="2">
    <location>
        <begin position="74"/>
        <end position="228"/>
    </location>
</feature>
<feature type="region of interest" description="Disordered" evidence="2">
    <location>
        <begin position="265"/>
        <end position="287"/>
    </location>
</feature>
<feature type="region of interest" description="Disordered" evidence="2">
    <location>
        <begin position="342"/>
        <end position="376"/>
    </location>
</feature>
<feature type="region of interest" description="Disordered" evidence="2">
    <location>
        <begin position="394"/>
        <end position="414"/>
    </location>
</feature>
<feature type="region of interest" description="Disordered" evidence="2">
    <location>
        <begin position="466"/>
        <end position="491"/>
    </location>
</feature>
<feature type="region of interest" description="Disordered" evidence="2">
    <location>
        <begin position="516"/>
        <end position="559"/>
    </location>
</feature>
<feature type="region of interest" description="Disordered" evidence="2">
    <location>
        <begin position="727"/>
        <end position="755"/>
    </location>
</feature>
<feature type="region of interest" description="Disordered" evidence="2">
    <location>
        <begin position="778"/>
        <end position="799"/>
    </location>
</feature>
<feature type="coiled-coil region" evidence="1">
    <location>
        <begin position="262"/>
        <end position="331"/>
    </location>
</feature>
<feature type="compositionally biased region" description="Low complexity" evidence="2">
    <location>
        <begin position="74"/>
        <end position="227"/>
    </location>
</feature>
<feature type="compositionally biased region" description="Basic and acidic residues" evidence="2">
    <location>
        <begin position="265"/>
        <end position="274"/>
    </location>
</feature>
<feature type="compositionally biased region" description="Low complexity" evidence="2">
    <location>
        <begin position="275"/>
        <end position="287"/>
    </location>
</feature>
<feature type="compositionally biased region" description="Polar residues" evidence="2">
    <location>
        <begin position="367"/>
        <end position="376"/>
    </location>
</feature>
<feature type="compositionally biased region" description="Low complexity" evidence="2">
    <location>
        <begin position="397"/>
        <end position="414"/>
    </location>
</feature>
<feature type="compositionally biased region" description="Low complexity" evidence="2">
    <location>
        <begin position="522"/>
        <end position="559"/>
    </location>
</feature>
<feature type="compositionally biased region" description="Gly residues" evidence="2">
    <location>
        <begin position="778"/>
        <end position="791"/>
    </location>
</feature>
<proteinExistence type="predicted"/>
<sequence>MDIGLITNKEDDEENDLSIKSPYSTTKNQNNNKTKDEIIKKDFISNINYSNNNIYSNIYNNIFNNIFNKFNTNNNNNNTTNNNPNNNNNNNNNNPNYNNNNPNYNNNDNNPNNNNNNNNNNNNNNNNNNNNKNYINNKNYINNNNINYINNNNNNNNNNNNNNNNNNNNNNNNNNNNNNNNNTSNNTSFNKQNNYNNNNYNSNSSSRSNNSNNNNNNNNNDDNIYNNGKNYIPNNGIINNHSNNDINNSYNNNNNIQNYYYKKNNNENKKKNNDNENNNYPNFNNNNNYNNYNNNDNIINNNNNNNNNNINNNINNNINNINNINNNNNKIIRQHPYINNENQQKHQKKIQHQENSNFEQLEKPEQLSHNSESSKTTILNENNSYLKNDKIMLSPTQQQQQQQQQQQQQQQQQYLISSSKYGYNNQNNNNNNGNSNQESILEKKKKIRKTRYFENEYQKLHESNIKNINNNNSNNNNNNNNNNNNNNNNNIYNEEELSLNTSSPIQSQSQYQVIYPHQQCPSSPTSSSTSTSSTTSSSSSSSSSSSSSSSSSTSSTSTITTTTTITTQSTFQNQIQLPQPSPYNQFTATFINSSNGFIKKKEKDAKKQIKVVTTLLIQHLISNNVTKFNVRLIESLLNVDFFKLKEILDIMECSKLVRNDKCNNYVWLGLDNPEFLNFALSTFHSKINFITKNSEFFCDNCKLNSENGVILNSPILQFSNVSPTLLSPSSSTSSETTTSTSTTTNNTSTTTISPSSNVSVNNSYSLVNMSDLYNGGSGGGSSGGGGSGGGVNNNNNVQNNINSGRKFRYKETELSTTVSQFLKLLLSDKCLTIHDVCFNFNPNIEKTHDNYISLRNSAKIKRCYDIANVFEAINLVQKSKSVEETRTQNYKWIGTTVLTNEYCQNNCPYILQENYIQQQQQLQLQQQQNQPKPPR</sequence>
<dbReference type="EMBL" id="AAFI02000047">
    <property type="protein sequence ID" value="EAL66109.2"/>
    <property type="molecule type" value="Genomic_DNA"/>
</dbReference>
<dbReference type="RefSeq" id="XP_640085.2">
    <property type="nucleotide sequence ID" value="XM_634993.2"/>
</dbReference>
<dbReference type="PaxDb" id="44689-DDB0252890"/>
<dbReference type="EnsemblProtists" id="EAL66109">
    <property type="protein sequence ID" value="EAL66109"/>
    <property type="gene ID" value="DDB_G0282499"/>
</dbReference>
<dbReference type="GeneID" id="8623614"/>
<dbReference type="KEGG" id="ddi:DDB_G0282499"/>
<dbReference type="dictyBase" id="DDB_G0282499"/>
<dbReference type="VEuPathDB" id="AmoebaDB:DDB_G0282499"/>
<dbReference type="HOGENOM" id="CLU_313404_0_0_1"/>
<dbReference type="InParanoid" id="Q54SF4"/>
<dbReference type="OMA" id="FIFCHYC"/>
<dbReference type="Reactome" id="R-DDI-913709">
    <property type="pathway name" value="O-linked glycosylation of mucins"/>
</dbReference>
<dbReference type="PRO" id="PR:Q54SF4"/>
<dbReference type="Proteomes" id="UP000002195">
    <property type="component" value="Chromosome 3"/>
</dbReference>
<dbReference type="GO" id="GO:0005667">
    <property type="term" value="C:transcription regulator complex"/>
    <property type="evidence" value="ECO:0007669"/>
    <property type="project" value="InterPro"/>
</dbReference>
<dbReference type="GO" id="GO:0006355">
    <property type="term" value="P:regulation of DNA-templated transcription"/>
    <property type="evidence" value="ECO:0007669"/>
    <property type="project" value="InterPro"/>
</dbReference>
<dbReference type="Gene3D" id="1.10.10.10">
    <property type="entry name" value="Winged helix-like DNA-binding domain superfamily/Winged helix DNA-binding domain"/>
    <property type="match status" value="1"/>
</dbReference>
<dbReference type="InterPro" id="IPR003316">
    <property type="entry name" value="E2F_WHTH_DNA-bd_dom"/>
</dbReference>
<dbReference type="InterPro" id="IPR052504">
    <property type="entry name" value="Mucin_signaling_protection"/>
</dbReference>
<dbReference type="InterPro" id="IPR036388">
    <property type="entry name" value="WH-like_DNA-bd_sf"/>
</dbReference>
<dbReference type="InterPro" id="IPR036390">
    <property type="entry name" value="WH_DNA-bd_sf"/>
</dbReference>
<dbReference type="PANTHER" id="PTHR24041:SF32">
    <property type="entry name" value="ANKYRIN REPEAT-CONTAINING PROTEIN"/>
    <property type="match status" value="1"/>
</dbReference>
<dbReference type="PANTHER" id="PTHR24041">
    <property type="entry name" value="MUCIN"/>
    <property type="match status" value="1"/>
</dbReference>
<dbReference type="Pfam" id="PF02319">
    <property type="entry name" value="E2F_TDP"/>
    <property type="match status" value="1"/>
</dbReference>
<dbReference type="SMART" id="SM01372">
    <property type="entry name" value="E2F_TDP"/>
    <property type="match status" value="1"/>
</dbReference>
<dbReference type="SUPFAM" id="SSF46785">
    <property type="entry name" value="Winged helix' DNA-binding domain"/>
    <property type="match status" value="1"/>
</dbReference>
<name>Y4797_DICDI</name>
<organism>
    <name type="scientific">Dictyostelium discoideum</name>
    <name type="common">Social amoeba</name>
    <dbReference type="NCBI Taxonomy" id="44689"/>
    <lineage>
        <taxon>Eukaryota</taxon>
        <taxon>Amoebozoa</taxon>
        <taxon>Evosea</taxon>
        <taxon>Eumycetozoa</taxon>
        <taxon>Dictyostelia</taxon>
        <taxon>Dictyosteliales</taxon>
        <taxon>Dictyosteliaceae</taxon>
        <taxon>Dictyostelium</taxon>
    </lineage>
</organism>
<accession>Q54SF4</accession>
<keyword id="KW-0175">Coiled coil</keyword>
<keyword id="KW-1185">Reference proteome</keyword>
<evidence type="ECO:0000255" key="1"/>
<evidence type="ECO:0000256" key="2">
    <source>
        <dbReference type="SAM" id="MobiDB-lite"/>
    </source>
</evidence>
<gene>
    <name type="ORF">DDB_G0282499</name>
</gene>
<protein>
    <recommendedName>
        <fullName>Putative uncharacterized protein DDB_G0282499</fullName>
    </recommendedName>
</protein>